<protein>
    <recommendedName>
        <fullName evidence="1">Putative membrane protein insertion efficiency factor</fullName>
    </recommendedName>
</protein>
<feature type="chain" id="PRO_0000171826" description="Putative membrane protein insertion efficiency factor">
    <location>
        <begin position="1"/>
        <end position="69"/>
    </location>
</feature>
<name>YIDD_GEOSL</name>
<evidence type="ECO:0000255" key="1">
    <source>
        <dbReference type="HAMAP-Rule" id="MF_00386"/>
    </source>
</evidence>
<keyword id="KW-0997">Cell inner membrane</keyword>
<keyword id="KW-1003">Cell membrane</keyword>
<keyword id="KW-0472">Membrane</keyword>
<keyword id="KW-1185">Reference proteome</keyword>
<proteinExistence type="inferred from homology"/>
<organism>
    <name type="scientific">Geobacter sulfurreducens (strain ATCC 51573 / DSM 12127 / PCA)</name>
    <dbReference type="NCBI Taxonomy" id="243231"/>
    <lineage>
        <taxon>Bacteria</taxon>
        <taxon>Pseudomonadati</taxon>
        <taxon>Thermodesulfobacteriota</taxon>
        <taxon>Desulfuromonadia</taxon>
        <taxon>Geobacterales</taxon>
        <taxon>Geobacteraceae</taxon>
        <taxon>Geobacter</taxon>
    </lineage>
</organism>
<gene>
    <name type="ordered locus">GSU3467</name>
</gene>
<reference key="1">
    <citation type="journal article" date="2003" name="Science">
        <title>Genome of Geobacter sulfurreducens: metal reduction in subsurface environments.</title>
        <authorList>
            <person name="Methe B.A."/>
            <person name="Nelson K.E."/>
            <person name="Eisen J.A."/>
            <person name="Paulsen I.T."/>
            <person name="Nelson W.C."/>
            <person name="Heidelberg J.F."/>
            <person name="Wu D."/>
            <person name="Wu M."/>
            <person name="Ward N.L."/>
            <person name="Beanan M.J."/>
            <person name="Dodson R.J."/>
            <person name="Madupu R."/>
            <person name="Brinkac L.M."/>
            <person name="Daugherty S.C."/>
            <person name="DeBoy R.T."/>
            <person name="Durkin A.S."/>
            <person name="Gwinn M.L."/>
            <person name="Kolonay J.F."/>
            <person name="Sullivan S.A."/>
            <person name="Haft D.H."/>
            <person name="Selengut J."/>
            <person name="Davidsen T.M."/>
            <person name="Zafar N."/>
            <person name="White O."/>
            <person name="Tran B."/>
            <person name="Romero C."/>
            <person name="Forberger H.A."/>
            <person name="Weidman J.F."/>
            <person name="Khouri H.M."/>
            <person name="Feldblyum T.V."/>
            <person name="Utterback T.R."/>
            <person name="Van Aken S.E."/>
            <person name="Lovley D.R."/>
            <person name="Fraser C.M."/>
        </authorList>
    </citation>
    <scope>NUCLEOTIDE SEQUENCE [LARGE SCALE GENOMIC DNA]</scope>
    <source>
        <strain>ATCC 51573 / DSM 12127 / PCA</strain>
    </source>
</reference>
<sequence>MLKGILYIIGIYQRYLSPLKGPTCRFYPSCSRYAHESLTRYGLVKGLWLTTIRILKCHPFHPGGVDPVK</sequence>
<dbReference type="EMBL" id="AE017180">
    <property type="protein sequence ID" value="AAR36857.1"/>
    <property type="molecule type" value="Genomic_DNA"/>
</dbReference>
<dbReference type="RefSeq" id="NP_954507.1">
    <property type="nucleotide sequence ID" value="NC_002939.5"/>
</dbReference>
<dbReference type="FunCoup" id="P61469">
    <property type="interactions" value="309"/>
</dbReference>
<dbReference type="STRING" id="243231.GSU3467"/>
<dbReference type="EnsemblBacteria" id="AAR36857">
    <property type="protein sequence ID" value="AAR36857"/>
    <property type="gene ID" value="GSU3467"/>
</dbReference>
<dbReference type="KEGG" id="gsu:GSU3467"/>
<dbReference type="PATRIC" id="fig|243231.5.peg.3489"/>
<dbReference type="eggNOG" id="COG0759">
    <property type="taxonomic scope" value="Bacteria"/>
</dbReference>
<dbReference type="HOGENOM" id="CLU_144811_6_0_7"/>
<dbReference type="InParanoid" id="P61469"/>
<dbReference type="OrthoDB" id="9801753at2"/>
<dbReference type="Proteomes" id="UP000000577">
    <property type="component" value="Chromosome"/>
</dbReference>
<dbReference type="GO" id="GO:0005886">
    <property type="term" value="C:plasma membrane"/>
    <property type="evidence" value="ECO:0007669"/>
    <property type="project" value="UniProtKB-SubCell"/>
</dbReference>
<dbReference type="HAMAP" id="MF_00386">
    <property type="entry name" value="UPF0161_YidD"/>
    <property type="match status" value="1"/>
</dbReference>
<dbReference type="InterPro" id="IPR002696">
    <property type="entry name" value="Membr_insert_effic_factor_YidD"/>
</dbReference>
<dbReference type="NCBIfam" id="TIGR00278">
    <property type="entry name" value="membrane protein insertion efficiency factor YidD"/>
    <property type="match status" value="1"/>
</dbReference>
<dbReference type="PANTHER" id="PTHR33383">
    <property type="entry name" value="MEMBRANE PROTEIN INSERTION EFFICIENCY FACTOR-RELATED"/>
    <property type="match status" value="1"/>
</dbReference>
<dbReference type="PANTHER" id="PTHR33383:SF1">
    <property type="entry name" value="MEMBRANE PROTEIN INSERTION EFFICIENCY FACTOR-RELATED"/>
    <property type="match status" value="1"/>
</dbReference>
<dbReference type="Pfam" id="PF01809">
    <property type="entry name" value="YidD"/>
    <property type="match status" value="1"/>
</dbReference>
<dbReference type="SMART" id="SM01234">
    <property type="entry name" value="Haemolytic"/>
    <property type="match status" value="1"/>
</dbReference>
<accession>P61469</accession>
<comment type="function">
    <text evidence="1">Could be involved in insertion of integral membrane proteins into the membrane.</text>
</comment>
<comment type="subcellular location">
    <subcellularLocation>
        <location evidence="1">Cell inner membrane</location>
        <topology evidence="1">Peripheral membrane protein</topology>
        <orientation evidence="1">Cytoplasmic side</orientation>
    </subcellularLocation>
</comment>
<comment type="similarity">
    <text evidence="1">Belongs to the UPF0161 family.</text>
</comment>